<dbReference type="EC" id="1.97.1.12" evidence="1"/>
<dbReference type="EMBL" id="AJ879453">
    <property type="protein sequence ID" value="CAI53793.1"/>
    <property type="molecule type" value="Genomic_DNA"/>
</dbReference>
<dbReference type="RefSeq" id="YP_319764.1">
    <property type="nucleotide sequence ID" value="NC_007407.1"/>
</dbReference>
<dbReference type="SMR" id="Q3V535"/>
<dbReference type="GeneID" id="3677496"/>
<dbReference type="GO" id="GO:0009535">
    <property type="term" value="C:chloroplast thylakoid membrane"/>
    <property type="evidence" value="ECO:0007669"/>
    <property type="project" value="UniProtKB-SubCell"/>
</dbReference>
<dbReference type="GO" id="GO:0009522">
    <property type="term" value="C:photosystem I"/>
    <property type="evidence" value="ECO:0007669"/>
    <property type="project" value="UniProtKB-KW"/>
</dbReference>
<dbReference type="GO" id="GO:0051539">
    <property type="term" value="F:4 iron, 4 sulfur cluster binding"/>
    <property type="evidence" value="ECO:0007669"/>
    <property type="project" value="UniProtKB-KW"/>
</dbReference>
<dbReference type="GO" id="GO:0016168">
    <property type="term" value="F:chlorophyll binding"/>
    <property type="evidence" value="ECO:0007669"/>
    <property type="project" value="UniProtKB-KW"/>
</dbReference>
<dbReference type="GO" id="GO:0009055">
    <property type="term" value="F:electron transfer activity"/>
    <property type="evidence" value="ECO:0007669"/>
    <property type="project" value="UniProtKB-UniRule"/>
</dbReference>
<dbReference type="GO" id="GO:0000287">
    <property type="term" value="F:magnesium ion binding"/>
    <property type="evidence" value="ECO:0007669"/>
    <property type="project" value="UniProtKB-UniRule"/>
</dbReference>
<dbReference type="GO" id="GO:0016491">
    <property type="term" value="F:oxidoreductase activity"/>
    <property type="evidence" value="ECO:0007669"/>
    <property type="project" value="UniProtKB-KW"/>
</dbReference>
<dbReference type="GO" id="GO:0015979">
    <property type="term" value="P:photosynthesis"/>
    <property type="evidence" value="ECO:0007669"/>
    <property type="project" value="UniProtKB-UniRule"/>
</dbReference>
<dbReference type="FunFam" id="1.20.1130.10:FF:000001">
    <property type="entry name" value="Photosystem I P700 chlorophyll a apoprotein A2"/>
    <property type="match status" value="1"/>
</dbReference>
<dbReference type="Gene3D" id="1.20.1130.10">
    <property type="entry name" value="Photosystem I PsaA/PsaB"/>
    <property type="match status" value="1"/>
</dbReference>
<dbReference type="HAMAP" id="MF_00482">
    <property type="entry name" value="PSI_PsaB"/>
    <property type="match status" value="1"/>
</dbReference>
<dbReference type="InterPro" id="IPR001280">
    <property type="entry name" value="PSI_PsaA/B"/>
</dbReference>
<dbReference type="InterPro" id="IPR020586">
    <property type="entry name" value="PSI_PsaA/B_CS"/>
</dbReference>
<dbReference type="InterPro" id="IPR036408">
    <property type="entry name" value="PSI_PsaA/B_sf"/>
</dbReference>
<dbReference type="InterPro" id="IPR006244">
    <property type="entry name" value="PSI_PsaB"/>
</dbReference>
<dbReference type="NCBIfam" id="TIGR01336">
    <property type="entry name" value="psaB"/>
    <property type="match status" value="1"/>
</dbReference>
<dbReference type="PANTHER" id="PTHR30128">
    <property type="entry name" value="OUTER MEMBRANE PROTEIN, OMPA-RELATED"/>
    <property type="match status" value="1"/>
</dbReference>
<dbReference type="PANTHER" id="PTHR30128:SF19">
    <property type="entry name" value="PHOTOSYSTEM I P700 CHLOROPHYLL A APOPROTEIN A1-RELATED"/>
    <property type="match status" value="1"/>
</dbReference>
<dbReference type="Pfam" id="PF00223">
    <property type="entry name" value="PsaA_PsaB"/>
    <property type="match status" value="1"/>
</dbReference>
<dbReference type="PIRSF" id="PIRSF002905">
    <property type="entry name" value="PSI_A"/>
    <property type="match status" value="1"/>
</dbReference>
<dbReference type="PRINTS" id="PR00257">
    <property type="entry name" value="PHOTSYSPSAAB"/>
</dbReference>
<dbReference type="SUPFAM" id="SSF81558">
    <property type="entry name" value="Photosystem I subunits PsaA/PsaB"/>
    <property type="match status" value="1"/>
</dbReference>
<dbReference type="PROSITE" id="PS00419">
    <property type="entry name" value="PHOTOSYSTEM_I_PSAAB"/>
    <property type="match status" value="1"/>
</dbReference>
<proteinExistence type="inferred from homology"/>
<name>PSAB_ACOCL</name>
<organism>
    <name type="scientific">Acorus calamus</name>
    <name type="common">Sweet flag</name>
    <dbReference type="NCBI Taxonomy" id="4465"/>
    <lineage>
        <taxon>Eukaryota</taxon>
        <taxon>Viridiplantae</taxon>
        <taxon>Streptophyta</taxon>
        <taxon>Embryophyta</taxon>
        <taxon>Tracheophyta</taxon>
        <taxon>Spermatophyta</taxon>
        <taxon>Magnoliopsida</taxon>
        <taxon>Liliopsida</taxon>
        <taxon>Acoraceae</taxon>
        <taxon>Acorus</taxon>
    </lineage>
</organism>
<keyword id="KW-0004">4Fe-4S</keyword>
<keyword id="KW-0148">Chlorophyll</keyword>
<keyword id="KW-0150">Chloroplast</keyword>
<keyword id="KW-0157">Chromophore</keyword>
<keyword id="KW-0249">Electron transport</keyword>
<keyword id="KW-0408">Iron</keyword>
<keyword id="KW-0411">Iron-sulfur</keyword>
<keyword id="KW-0460">Magnesium</keyword>
<keyword id="KW-0472">Membrane</keyword>
<keyword id="KW-0479">Metal-binding</keyword>
<keyword id="KW-0560">Oxidoreductase</keyword>
<keyword id="KW-0602">Photosynthesis</keyword>
<keyword id="KW-0603">Photosystem I</keyword>
<keyword id="KW-0934">Plastid</keyword>
<keyword id="KW-0793">Thylakoid</keyword>
<keyword id="KW-0812">Transmembrane</keyword>
<keyword id="KW-1133">Transmembrane helix</keyword>
<keyword id="KW-0813">Transport</keyword>
<feature type="chain" id="PRO_0000300030" description="Photosystem I P700 chlorophyll a apoprotein A2">
    <location>
        <begin position="1"/>
        <end position="734"/>
    </location>
</feature>
<feature type="transmembrane region" description="Helical; Name=I" evidence="1">
    <location>
        <begin position="46"/>
        <end position="69"/>
    </location>
</feature>
<feature type="transmembrane region" description="Helical; Name=II" evidence="1">
    <location>
        <begin position="135"/>
        <end position="158"/>
    </location>
</feature>
<feature type="transmembrane region" description="Helical; Name=III" evidence="1">
    <location>
        <begin position="175"/>
        <end position="199"/>
    </location>
</feature>
<feature type="transmembrane region" description="Helical; Name=IV" evidence="1">
    <location>
        <begin position="273"/>
        <end position="291"/>
    </location>
</feature>
<feature type="transmembrane region" description="Helical; Name=V" evidence="1">
    <location>
        <begin position="330"/>
        <end position="353"/>
    </location>
</feature>
<feature type="transmembrane region" description="Helical; Name=VI" evidence="1">
    <location>
        <begin position="369"/>
        <end position="395"/>
    </location>
</feature>
<feature type="transmembrane region" description="Helical; Name=VII" evidence="1">
    <location>
        <begin position="417"/>
        <end position="439"/>
    </location>
</feature>
<feature type="transmembrane region" description="Helical; Name=VIII" evidence="1">
    <location>
        <begin position="517"/>
        <end position="535"/>
    </location>
</feature>
<feature type="transmembrane region" description="Helical; Name=IX" evidence="1">
    <location>
        <begin position="575"/>
        <end position="596"/>
    </location>
</feature>
<feature type="transmembrane region" description="Helical; Name=X" evidence="1">
    <location>
        <begin position="643"/>
        <end position="665"/>
    </location>
</feature>
<feature type="transmembrane region" description="Helical; Name=XI" evidence="1">
    <location>
        <begin position="707"/>
        <end position="727"/>
    </location>
</feature>
<feature type="binding site" evidence="1">
    <location>
        <position position="559"/>
    </location>
    <ligand>
        <name>[4Fe-4S] cluster</name>
        <dbReference type="ChEBI" id="CHEBI:49883"/>
        <note>ligand shared between dimeric partners</note>
    </ligand>
</feature>
<feature type="binding site" evidence="1">
    <location>
        <position position="568"/>
    </location>
    <ligand>
        <name>[4Fe-4S] cluster</name>
        <dbReference type="ChEBI" id="CHEBI:49883"/>
        <note>ligand shared between dimeric partners</note>
    </ligand>
</feature>
<feature type="binding site" description="axial binding residue" evidence="1">
    <location>
        <position position="654"/>
    </location>
    <ligand>
        <name>chlorophyll a</name>
        <dbReference type="ChEBI" id="CHEBI:58416"/>
        <label>B1</label>
    </ligand>
    <ligandPart>
        <name>Mg</name>
        <dbReference type="ChEBI" id="CHEBI:25107"/>
    </ligandPart>
</feature>
<feature type="binding site" description="axial binding residue" evidence="1">
    <location>
        <position position="662"/>
    </location>
    <ligand>
        <name>chlorophyll a</name>
        <dbReference type="ChEBI" id="CHEBI:58416"/>
        <label>B3</label>
    </ligand>
    <ligandPart>
        <name>Mg</name>
        <dbReference type="ChEBI" id="CHEBI:25107"/>
    </ligandPart>
</feature>
<feature type="binding site" evidence="1">
    <location>
        <position position="670"/>
    </location>
    <ligand>
        <name>chlorophyll a</name>
        <dbReference type="ChEBI" id="CHEBI:58416"/>
        <label>B3</label>
    </ligand>
</feature>
<feature type="binding site" evidence="1">
    <location>
        <position position="671"/>
    </location>
    <ligand>
        <name>phylloquinone</name>
        <dbReference type="ChEBI" id="CHEBI:18067"/>
        <label>B</label>
    </ligand>
</feature>
<comment type="function">
    <text evidence="1">PsaA and PsaB bind P700, the primary electron donor of photosystem I (PSI), as well as the electron acceptors A0, A1 and FX. PSI is a plastocyanin-ferredoxin oxidoreductase, converting photonic excitation into a charge separation, which transfers an electron from the donor P700 chlorophyll pair to the spectroscopically characterized acceptors A0, A1, FX, FA and FB in turn. Oxidized P700 is reduced on the lumenal side of the thylakoid membrane by plastocyanin.</text>
</comment>
<comment type="catalytic activity">
    <reaction evidence="1">
        <text>reduced [plastocyanin] + hnu + oxidized [2Fe-2S]-[ferredoxin] = oxidized [plastocyanin] + reduced [2Fe-2S]-[ferredoxin]</text>
        <dbReference type="Rhea" id="RHEA:30407"/>
        <dbReference type="Rhea" id="RHEA-COMP:10000"/>
        <dbReference type="Rhea" id="RHEA-COMP:10001"/>
        <dbReference type="Rhea" id="RHEA-COMP:10039"/>
        <dbReference type="Rhea" id="RHEA-COMP:10040"/>
        <dbReference type="ChEBI" id="CHEBI:29036"/>
        <dbReference type="ChEBI" id="CHEBI:30212"/>
        <dbReference type="ChEBI" id="CHEBI:33737"/>
        <dbReference type="ChEBI" id="CHEBI:33738"/>
        <dbReference type="ChEBI" id="CHEBI:49552"/>
        <dbReference type="EC" id="1.97.1.12"/>
    </reaction>
</comment>
<comment type="cofactor">
    <text evidence="1">P700 is a chlorophyll a/chlorophyll a' dimer, A0 is one or more chlorophyll a, A1 is one or both phylloquinones and FX is a shared 4Fe-4S iron-sulfur center.</text>
</comment>
<comment type="subunit">
    <text evidence="1">The PsaA/B heterodimer binds the P700 chlorophyll special pair and subsequent electron acceptors. PSI consists of a core antenna complex that captures photons, and an electron transfer chain that converts photonic excitation into a charge separation. The eukaryotic PSI reaction center is composed of at least 11 subunits.</text>
</comment>
<comment type="subcellular location">
    <subcellularLocation>
        <location evidence="1">Plastid</location>
        <location evidence="1">Chloroplast thylakoid membrane</location>
        <topology evidence="1">Multi-pass membrane protein</topology>
    </subcellularLocation>
</comment>
<comment type="similarity">
    <text evidence="1">Belongs to the PsaA/PsaB family.</text>
</comment>
<sequence length="734" mass="82300">MALRFPRFSQGLAQDPTTRRIWFGIATAHDFESHDDITEERLYQNIFASHFGQLAIIFLWTSGNLFHVAWQGNFESWVQDPLHVRPIAHAIWDPHFGQPAVEAFTRGGAPGPVNIAYSGVYQWWYTIGLRTNEDLYTGALFLLFLSAISLIGGWLHLQPKWKPSVSWFKNAESRLNHHLSGLFGVSSLAWTGHLVHVAIPASRGEYVRWNNFLDVLPHPQGLGPLFSGQWNLYAQNPDSSSHLFGTSQGAGTAILTLLGGFHPQTQSLWLTDMAHHHLAIAFIFLIAGHMYRTNFGIGHSIKDLLEAHTPPGGRLGRGHKGLYDTINNSLHFQLGLALACLGVITSLVAQHMYSLPAYAFIAQDFTTQAASYTHHQYIAGFIMTGAFAHGAIFFIRDYNPEQNEDNVLARMLDHKEAIISHLSWASLFLGFHTLGLYVHNDVMLAFGTPEKQILIEPIFAQWIQSAHGKTLYGFDVLLSSTSGPAFNAGRSIWLPGWLSAVNENSNSLFLTIGPGDFLVHHAIALGLHTTTLILVKGALDARGSKLMPDKKDFGYSFPCDGPGRGGTCDISAWDAFYLAVFWMLNTIGWVTFYWHWKHITLWQGNVSQFNESSTYLMGWLRDYLWLNSSQLINGYNPFGMNSLSVWAWMFLFGHLVWATGFMFLISWRGYWQGLIETLAWAHERTPLANLIRWRDKPVALSIVQARLVGLAHFSVGYIFTYAAFLIASTSGKFG</sequence>
<accession>Q3V535</accession>
<geneLocation type="chloroplast"/>
<evidence type="ECO:0000255" key="1">
    <source>
        <dbReference type="HAMAP-Rule" id="MF_00482"/>
    </source>
</evidence>
<gene>
    <name evidence="1" type="primary">psaB</name>
</gene>
<protein>
    <recommendedName>
        <fullName evidence="1">Photosystem I P700 chlorophyll a apoprotein A2</fullName>
        <ecNumber evidence="1">1.97.1.12</ecNumber>
    </recommendedName>
    <alternativeName>
        <fullName evidence="1">PSI-B</fullName>
    </alternativeName>
    <alternativeName>
        <fullName evidence="1">PsaB</fullName>
    </alternativeName>
</protein>
<reference key="1">
    <citation type="journal article" date="2005" name="Mol. Biol. Evol.">
        <title>Analysis of Acorus calamus chloroplast genome and its phylogenetic implications.</title>
        <authorList>
            <person name="Goremykin V.V."/>
            <person name="Holland B."/>
            <person name="Hirsch-Ernst K.I."/>
            <person name="Hellwig F.H."/>
        </authorList>
    </citation>
    <scope>NUCLEOTIDE SEQUENCE [LARGE SCALE GENOMIC DNA]</scope>
</reference>